<keyword id="KW-0903">Direct protein sequencing</keyword>
<keyword id="KW-0349">Heme</keyword>
<keyword id="KW-0408">Iron</keyword>
<keyword id="KW-0479">Metal-binding</keyword>
<keyword id="KW-0561">Oxygen transport</keyword>
<keyword id="KW-0813">Transport</keyword>
<protein>
    <recommendedName>
        <fullName>Giant hemoglobin AI chain</fullName>
    </recommendedName>
</protein>
<dbReference type="PIR" id="S01807">
    <property type="entry name" value="S01807"/>
</dbReference>
<dbReference type="SMR" id="P20412"/>
<dbReference type="GO" id="GO:0020037">
    <property type="term" value="F:heme binding"/>
    <property type="evidence" value="ECO:0007669"/>
    <property type="project" value="InterPro"/>
</dbReference>
<dbReference type="GO" id="GO:0046872">
    <property type="term" value="F:metal ion binding"/>
    <property type="evidence" value="ECO:0007669"/>
    <property type="project" value="UniProtKB-KW"/>
</dbReference>
<dbReference type="GO" id="GO:0019825">
    <property type="term" value="F:oxygen binding"/>
    <property type="evidence" value="ECO:0007669"/>
    <property type="project" value="InterPro"/>
</dbReference>
<dbReference type="GO" id="GO:0005344">
    <property type="term" value="F:oxygen carrier activity"/>
    <property type="evidence" value="ECO:0007669"/>
    <property type="project" value="UniProtKB-KW"/>
</dbReference>
<dbReference type="Gene3D" id="1.10.490.10">
    <property type="entry name" value="Globins"/>
    <property type="match status" value="1"/>
</dbReference>
<dbReference type="InterPro" id="IPR000971">
    <property type="entry name" value="Globin"/>
</dbReference>
<dbReference type="InterPro" id="IPR012292">
    <property type="entry name" value="Globin/Proto"/>
</dbReference>
<dbReference type="PROSITE" id="PS01033">
    <property type="entry name" value="GLOBIN"/>
    <property type="match status" value="1"/>
</dbReference>
<proteinExistence type="evidence at protein level"/>
<accession>P20412</accession>
<organism>
    <name type="scientific">Lamellibrachia sp.</name>
    <name type="common">Deep-sea giant tube worm</name>
    <dbReference type="NCBI Taxonomy" id="6424"/>
    <lineage>
        <taxon>Eukaryota</taxon>
        <taxon>Metazoa</taxon>
        <taxon>Spiralia</taxon>
        <taxon>Lophotrochozoa</taxon>
        <taxon>Annelida</taxon>
        <taxon>Polychaeta</taxon>
        <taxon>Sedentaria</taxon>
        <taxon>Canalipalpata</taxon>
        <taxon>Sabellida</taxon>
        <taxon>Siboglinidae</taxon>
        <taxon>Lamellibrachia</taxon>
    </lineage>
</organism>
<reference key="1">
    <citation type="journal article" date="1988" name="Biochem. J.">
        <title>N-terminal amino acid sequence of the deep-sea tube worm haemoglobin remarkably resembles that of annelid haemoglobin.</title>
        <authorList>
            <person name="Suzuki T."/>
            <person name="Takagi T."/>
            <person name="Ohta S."/>
        </authorList>
    </citation>
    <scope>PROTEIN SEQUENCE</scope>
</reference>
<evidence type="ECO:0000255" key="1">
    <source>
        <dbReference type="PROSITE-ProRule" id="PRU00238"/>
    </source>
</evidence>
<name>GLB1_LAMSP</name>
<comment type="subunit">
    <text>Giant hemoglobin is composed of four heme-containing chains (AI to AIV), and two linker chains (AV and AVI).</text>
</comment>
<comment type="similarity">
    <text evidence="1">Belongs to the globin family.</text>
</comment>
<sequence>TDCGMLQRIKVKQQWASVYSSGIAREDFGEAIWKAVFALAP</sequence>
<feature type="chain" id="PRO_0000052520" description="Giant hemoglobin AI chain">
    <location>
        <begin position="1"/>
        <end position="41" status="greater than"/>
    </location>
</feature>
<feature type="domain" description="Globin" evidence="1">
    <location>
        <begin position="2"/>
        <end position="41"/>
    </location>
</feature>
<feature type="non-terminal residue">
    <location>
        <position position="41"/>
    </location>
</feature>